<dbReference type="EC" id="4.2.1.19" evidence="1"/>
<dbReference type="EMBL" id="CP001052">
    <property type="protein sequence ID" value="ACD17948.1"/>
    <property type="molecule type" value="Genomic_DNA"/>
</dbReference>
<dbReference type="RefSeq" id="WP_012434507.1">
    <property type="nucleotide sequence ID" value="NC_010681.1"/>
</dbReference>
<dbReference type="SMR" id="B2SZ63"/>
<dbReference type="STRING" id="398527.Bphyt_3558"/>
<dbReference type="GeneID" id="97311076"/>
<dbReference type="KEGG" id="bpy:Bphyt_3558"/>
<dbReference type="eggNOG" id="COG0131">
    <property type="taxonomic scope" value="Bacteria"/>
</dbReference>
<dbReference type="HOGENOM" id="CLU_044308_2_0_4"/>
<dbReference type="OrthoDB" id="9790411at2"/>
<dbReference type="UniPathway" id="UPA00031">
    <property type="reaction ID" value="UER00011"/>
</dbReference>
<dbReference type="Proteomes" id="UP000001739">
    <property type="component" value="Chromosome 1"/>
</dbReference>
<dbReference type="GO" id="GO:0005737">
    <property type="term" value="C:cytoplasm"/>
    <property type="evidence" value="ECO:0007669"/>
    <property type="project" value="UniProtKB-SubCell"/>
</dbReference>
<dbReference type="GO" id="GO:0004424">
    <property type="term" value="F:imidazoleglycerol-phosphate dehydratase activity"/>
    <property type="evidence" value="ECO:0007669"/>
    <property type="project" value="UniProtKB-UniRule"/>
</dbReference>
<dbReference type="GO" id="GO:0000105">
    <property type="term" value="P:L-histidine biosynthetic process"/>
    <property type="evidence" value="ECO:0007669"/>
    <property type="project" value="UniProtKB-UniRule"/>
</dbReference>
<dbReference type="CDD" id="cd07914">
    <property type="entry name" value="IGPD"/>
    <property type="match status" value="1"/>
</dbReference>
<dbReference type="FunFam" id="3.30.230.40:FF:000002">
    <property type="entry name" value="Imidazoleglycerol-phosphate dehydratase"/>
    <property type="match status" value="1"/>
</dbReference>
<dbReference type="FunFam" id="3.30.230.40:FF:000003">
    <property type="entry name" value="Imidazoleglycerol-phosphate dehydratase HisB"/>
    <property type="match status" value="1"/>
</dbReference>
<dbReference type="Gene3D" id="3.30.230.40">
    <property type="entry name" value="Imidazole glycerol phosphate dehydratase, domain 1"/>
    <property type="match status" value="2"/>
</dbReference>
<dbReference type="HAMAP" id="MF_00076">
    <property type="entry name" value="HisB"/>
    <property type="match status" value="1"/>
</dbReference>
<dbReference type="InterPro" id="IPR038494">
    <property type="entry name" value="IGPD_sf"/>
</dbReference>
<dbReference type="InterPro" id="IPR000807">
    <property type="entry name" value="ImidazoleglycerolP_deHydtase"/>
</dbReference>
<dbReference type="InterPro" id="IPR020565">
    <property type="entry name" value="ImidazoleglycerP_deHydtase_CS"/>
</dbReference>
<dbReference type="InterPro" id="IPR020568">
    <property type="entry name" value="Ribosomal_Su5_D2-typ_SF"/>
</dbReference>
<dbReference type="NCBIfam" id="NF002106">
    <property type="entry name" value="PRK00951.1-1"/>
    <property type="match status" value="1"/>
</dbReference>
<dbReference type="NCBIfam" id="NF002109">
    <property type="entry name" value="PRK00951.1-5"/>
    <property type="match status" value="1"/>
</dbReference>
<dbReference type="NCBIfam" id="NF002111">
    <property type="entry name" value="PRK00951.2-1"/>
    <property type="match status" value="1"/>
</dbReference>
<dbReference type="NCBIfam" id="NF002114">
    <property type="entry name" value="PRK00951.2-4"/>
    <property type="match status" value="1"/>
</dbReference>
<dbReference type="PANTHER" id="PTHR23133:SF2">
    <property type="entry name" value="IMIDAZOLEGLYCEROL-PHOSPHATE DEHYDRATASE"/>
    <property type="match status" value="1"/>
</dbReference>
<dbReference type="PANTHER" id="PTHR23133">
    <property type="entry name" value="IMIDAZOLEGLYCEROL-PHOSPHATE DEHYDRATASE HIS7"/>
    <property type="match status" value="1"/>
</dbReference>
<dbReference type="Pfam" id="PF00475">
    <property type="entry name" value="IGPD"/>
    <property type="match status" value="1"/>
</dbReference>
<dbReference type="SUPFAM" id="SSF54211">
    <property type="entry name" value="Ribosomal protein S5 domain 2-like"/>
    <property type="match status" value="2"/>
</dbReference>
<dbReference type="PROSITE" id="PS00954">
    <property type="entry name" value="IGP_DEHYDRATASE_1"/>
    <property type="match status" value="1"/>
</dbReference>
<dbReference type="PROSITE" id="PS00955">
    <property type="entry name" value="IGP_DEHYDRATASE_2"/>
    <property type="match status" value="1"/>
</dbReference>
<sequence>MRLAEVVRNTSETQIRVKINLDGTGQQKLATGVPFLDHMLDQIARHGLFDLEIEAHGDLHIDDHHTVEDTGITLGQAVAKAIGDRKGIVRYGHSYVPLDEALSRVVIDFSGRPGLEFHVPFTRARIGTFDVDLSIEFFRGFVNHAGVTLHIDNLRGLNAHHQMETVFKAFGRALRMATELDERAAGQIPSTKGSL</sequence>
<evidence type="ECO:0000255" key="1">
    <source>
        <dbReference type="HAMAP-Rule" id="MF_00076"/>
    </source>
</evidence>
<keyword id="KW-0028">Amino-acid biosynthesis</keyword>
<keyword id="KW-0963">Cytoplasm</keyword>
<keyword id="KW-0368">Histidine biosynthesis</keyword>
<keyword id="KW-0456">Lyase</keyword>
<organism>
    <name type="scientific">Paraburkholderia phytofirmans (strain DSM 17436 / LMG 22146 / PsJN)</name>
    <name type="common">Burkholderia phytofirmans</name>
    <dbReference type="NCBI Taxonomy" id="398527"/>
    <lineage>
        <taxon>Bacteria</taxon>
        <taxon>Pseudomonadati</taxon>
        <taxon>Pseudomonadota</taxon>
        <taxon>Betaproteobacteria</taxon>
        <taxon>Burkholderiales</taxon>
        <taxon>Burkholderiaceae</taxon>
        <taxon>Paraburkholderia</taxon>
    </lineage>
</organism>
<comment type="catalytic activity">
    <reaction evidence="1">
        <text>D-erythro-1-(imidazol-4-yl)glycerol 3-phosphate = 3-(imidazol-4-yl)-2-oxopropyl phosphate + H2O</text>
        <dbReference type="Rhea" id="RHEA:11040"/>
        <dbReference type="ChEBI" id="CHEBI:15377"/>
        <dbReference type="ChEBI" id="CHEBI:57766"/>
        <dbReference type="ChEBI" id="CHEBI:58278"/>
        <dbReference type="EC" id="4.2.1.19"/>
    </reaction>
</comment>
<comment type="pathway">
    <text evidence="1">Amino-acid biosynthesis; L-histidine biosynthesis; L-histidine from 5-phospho-alpha-D-ribose 1-diphosphate: step 6/9.</text>
</comment>
<comment type="subcellular location">
    <subcellularLocation>
        <location evidence="1">Cytoplasm</location>
    </subcellularLocation>
</comment>
<comment type="similarity">
    <text evidence="1">Belongs to the imidazoleglycerol-phosphate dehydratase family.</text>
</comment>
<accession>B2SZ63</accession>
<protein>
    <recommendedName>
        <fullName evidence="1">Imidazoleglycerol-phosphate dehydratase</fullName>
        <shortName evidence="1">IGPD</shortName>
        <ecNumber evidence="1">4.2.1.19</ecNumber>
    </recommendedName>
</protein>
<reference key="1">
    <citation type="journal article" date="2011" name="J. Bacteriol.">
        <title>Complete genome sequence of the plant growth-promoting endophyte Burkholderia phytofirmans strain PsJN.</title>
        <authorList>
            <person name="Weilharter A."/>
            <person name="Mitter B."/>
            <person name="Shin M.V."/>
            <person name="Chain P.S."/>
            <person name="Nowak J."/>
            <person name="Sessitsch A."/>
        </authorList>
    </citation>
    <scope>NUCLEOTIDE SEQUENCE [LARGE SCALE GENOMIC DNA]</scope>
    <source>
        <strain>DSM 17436 / LMG 22146 / PsJN</strain>
    </source>
</reference>
<proteinExistence type="inferred from homology"/>
<feature type="chain" id="PRO_1000092679" description="Imidazoleglycerol-phosphate dehydratase">
    <location>
        <begin position="1"/>
        <end position="195"/>
    </location>
</feature>
<name>HIS7_PARPJ</name>
<gene>
    <name evidence="1" type="primary">hisB</name>
    <name type="ordered locus">Bphyt_3558</name>
</gene>